<protein>
    <recommendedName>
        <fullName evidence="1">Protein ApaG</fullName>
    </recommendedName>
</protein>
<accession>B7NHF6</accession>
<organism>
    <name type="scientific">Escherichia coli O7:K1 (strain IAI39 / ExPEC)</name>
    <dbReference type="NCBI Taxonomy" id="585057"/>
    <lineage>
        <taxon>Bacteria</taxon>
        <taxon>Pseudomonadati</taxon>
        <taxon>Pseudomonadota</taxon>
        <taxon>Gammaproteobacteria</taxon>
        <taxon>Enterobacterales</taxon>
        <taxon>Enterobacteriaceae</taxon>
        <taxon>Escherichia</taxon>
    </lineage>
</organism>
<reference key="1">
    <citation type="journal article" date="2009" name="PLoS Genet.">
        <title>Organised genome dynamics in the Escherichia coli species results in highly diverse adaptive paths.</title>
        <authorList>
            <person name="Touchon M."/>
            <person name="Hoede C."/>
            <person name="Tenaillon O."/>
            <person name="Barbe V."/>
            <person name="Baeriswyl S."/>
            <person name="Bidet P."/>
            <person name="Bingen E."/>
            <person name="Bonacorsi S."/>
            <person name="Bouchier C."/>
            <person name="Bouvet O."/>
            <person name="Calteau A."/>
            <person name="Chiapello H."/>
            <person name="Clermont O."/>
            <person name="Cruveiller S."/>
            <person name="Danchin A."/>
            <person name="Diard M."/>
            <person name="Dossat C."/>
            <person name="Karoui M.E."/>
            <person name="Frapy E."/>
            <person name="Garry L."/>
            <person name="Ghigo J.M."/>
            <person name="Gilles A.M."/>
            <person name="Johnson J."/>
            <person name="Le Bouguenec C."/>
            <person name="Lescat M."/>
            <person name="Mangenot S."/>
            <person name="Martinez-Jehanne V."/>
            <person name="Matic I."/>
            <person name="Nassif X."/>
            <person name="Oztas S."/>
            <person name="Petit M.A."/>
            <person name="Pichon C."/>
            <person name="Rouy Z."/>
            <person name="Ruf C.S."/>
            <person name="Schneider D."/>
            <person name="Tourret J."/>
            <person name="Vacherie B."/>
            <person name="Vallenet D."/>
            <person name="Medigue C."/>
            <person name="Rocha E.P.C."/>
            <person name="Denamur E."/>
        </authorList>
    </citation>
    <scope>NUCLEOTIDE SEQUENCE [LARGE SCALE GENOMIC DNA]</scope>
    <source>
        <strain>IAI39 / ExPEC</strain>
    </source>
</reference>
<sequence length="125" mass="13867">MINSPRVCIQVQSVYIEAQSSPDNERYVFAYTVTIRNLGRAPVQLLGRYWLITNGNGRETEVQGEGVVGVQPLIAPGEEYQYTSGAIIETPLGTMQGHYEMIDENGVPFSIDIPVFRLAVPTLIH</sequence>
<gene>
    <name evidence="1" type="primary">apaG</name>
    <name type="ordered locus">ECIAI39_0053</name>
</gene>
<name>APAG_ECO7I</name>
<evidence type="ECO:0000255" key="1">
    <source>
        <dbReference type="HAMAP-Rule" id="MF_00791"/>
    </source>
</evidence>
<feature type="chain" id="PRO_1000133785" description="Protein ApaG">
    <location>
        <begin position="1"/>
        <end position="125"/>
    </location>
</feature>
<feature type="domain" description="ApaG" evidence="1">
    <location>
        <begin position="1"/>
        <end position="125"/>
    </location>
</feature>
<proteinExistence type="inferred from homology"/>
<dbReference type="EMBL" id="CU928164">
    <property type="protein sequence ID" value="CAR16194.1"/>
    <property type="molecule type" value="Genomic_DNA"/>
</dbReference>
<dbReference type="RefSeq" id="WP_000610901.1">
    <property type="nucleotide sequence ID" value="NC_011750.1"/>
</dbReference>
<dbReference type="RefSeq" id="YP_002406101.1">
    <property type="nucleotide sequence ID" value="NC_011750.1"/>
</dbReference>
<dbReference type="SMR" id="B7NHF6"/>
<dbReference type="STRING" id="585057.ECIAI39_0053"/>
<dbReference type="GeneID" id="93777385"/>
<dbReference type="KEGG" id="ect:ECIAI39_0053"/>
<dbReference type="PATRIC" id="fig|585057.6.peg.57"/>
<dbReference type="HOGENOM" id="CLU_128074_0_0_6"/>
<dbReference type="Proteomes" id="UP000000749">
    <property type="component" value="Chromosome"/>
</dbReference>
<dbReference type="GO" id="GO:0070987">
    <property type="term" value="P:error-free translesion synthesis"/>
    <property type="evidence" value="ECO:0007669"/>
    <property type="project" value="TreeGrafter"/>
</dbReference>
<dbReference type="Gene3D" id="2.60.40.1470">
    <property type="entry name" value="ApaG domain"/>
    <property type="match status" value="1"/>
</dbReference>
<dbReference type="HAMAP" id="MF_00791">
    <property type="entry name" value="ApaG"/>
    <property type="match status" value="1"/>
</dbReference>
<dbReference type="InterPro" id="IPR007474">
    <property type="entry name" value="ApaG_domain"/>
</dbReference>
<dbReference type="InterPro" id="IPR036767">
    <property type="entry name" value="ApaG_sf"/>
</dbReference>
<dbReference type="InterPro" id="IPR023065">
    <property type="entry name" value="Uncharacterised_ApaG"/>
</dbReference>
<dbReference type="NCBIfam" id="NF003967">
    <property type="entry name" value="PRK05461.1"/>
    <property type="match status" value="1"/>
</dbReference>
<dbReference type="PANTHER" id="PTHR14289">
    <property type="entry name" value="F-BOX ONLY PROTEIN 3"/>
    <property type="match status" value="1"/>
</dbReference>
<dbReference type="PANTHER" id="PTHR14289:SF16">
    <property type="entry name" value="POLYMERASE DELTA-INTERACTING PROTEIN 2"/>
    <property type="match status" value="1"/>
</dbReference>
<dbReference type="Pfam" id="PF04379">
    <property type="entry name" value="DUF525"/>
    <property type="match status" value="1"/>
</dbReference>
<dbReference type="SUPFAM" id="SSF110069">
    <property type="entry name" value="ApaG-like"/>
    <property type="match status" value="1"/>
</dbReference>
<dbReference type="PROSITE" id="PS51087">
    <property type="entry name" value="APAG"/>
    <property type="match status" value="1"/>
</dbReference>